<evidence type="ECO:0000255" key="1">
    <source>
        <dbReference type="HAMAP-Rule" id="MF_01200"/>
    </source>
</evidence>
<organism>
    <name type="scientific">Methylococcus capsulatus (strain ATCC 33009 / NCIMB 11132 / Bath)</name>
    <dbReference type="NCBI Taxonomy" id="243233"/>
    <lineage>
        <taxon>Bacteria</taxon>
        <taxon>Pseudomonadati</taxon>
        <taxon>Pseudomonadota</taxon>
        <taxon>Gammaproteobacteria</taxon>
        <taxon>Methylococcales</taxon>
        <taxon>Methylococcaceae</taxon>
        <taxon>Methylococcus</taxon>
    </lineage>
</organism>
<protein>
    <recommendedName>
        <fullName evidence="1">Orotidine 5'-phosphate decarboxylase</fullName>
        <ecNumber evidence="1">4.1.1.23</ecNumber>
    </recommendedName>
    <alternativeName>
        <fullName evidence="1">OMP decarboxylase</fullName>
        <shortName evidence="1">OMPDCase</shortName>
        <shortName evidence="1">OMPdecase</shortName>
    </alternativeName>
</protein>
<feature type="chain" id="PRO_0000241876" description="Orotidine 5'-phosphate decarboxylase">
    <location>
        <begin position="1"/>
        <end position="242"/>
    </location>
</feature>
<feature type="active site" description="Proton donor" evidence="1">
    <location>
        <position position="73"/>
    </location>
</feature>
<feature type="binding site" evidence="1">
    <location>
        <position position="21"/>
    </location>
    <ligand>
        <name>substrate</name>
    </ligand>
</feature>
<feature type="binding site" evidence="1">
    <location>
        <position position="43"/>
    </location>
    <ligand>
        <name>substrate</name>
    </ligand>
</feature>
<feature type="binding site" evidence="1">
    <location>
        <begin position="71"/>
        <end position="80"/>
    </location>
    <ligand>
        <name>substrate</name>
    </ligand>
</feature>
<feature type="binding site" evidence="1">
    <location>
        <position position="124"/>
    </location>
    <ligand>
        <name>substrate</name>
    </ligand>
</feature>
<feature type="binding site" evidence="1">
    <location>
        <position position="185"/>
    </location>
    <ligand>
        <name>substrate</name>
    </ligand>
</feature>
<feature type="binding site" evidence="1">
    <location>
        <position position="195"/>
    </location>
    <ligand>
        <name>substrate</name>
    </ligand>
</feature>
<feature type="binding site" evidence="1">
    <location>
        <position position="215"/>
    </location>
    <ligand>
        <name>substrate</name>
    </ligand>
</feature>
<feature type="binding site" evidence="1">
    <location>
        <position position="216"/>
    </location>
    <ligand>
        <name>substrate</name>
    </ligand>
</feature>
<dbReference type="EC" id="4.1.1.23" evidence="1"/>
<dbReference type="EMBL" id="AE017282">
    <property type="protein sequence ID" value="AAU92623.1"/>
    <property type="molecule type" value="Genomic_DNA"/>
</dbReference>
<dbReference type="RefSeq" id="WP_010960389.1">
    <property type="nucleotide sequence ID" value="NC_002977.6"/>
</dbReference>
<dbReference type="SMR" id="Q609Y2"/>
<dbReference type="STRING" id="243233.MCA1094"/>
<dbReference type="GeneID" id="88223387"/>
<dbReference type="KEGG" id="mca:MCA1094"/>
<dbReference type="eggNOG" id="COG0284">
    <property type="taxonomic scope" value="Bacteria"/>
</dbReference>
<dbReference type="HOGENOM" id="CLU_067069_1_0_6"/>
<dbReference type="UniPathway" id="UPA00070">
    <property type="reaction ID" value="UER00120"/>
</dbReference>
<dbReference type="Proteomes" id="UP000006821">
    <property type="component" value="Chromosome"/>
</dbReference>
<dbReference type="GO" id="GO:0005829">
    <property type="term" value="C:cytosol"/>
    <property type="evidence" value="ECO:0007669"/>
    <property type="project" value="TreeGrafter"/>
</dbReference>
<dbReference type="GO" id="GO:0004590">
    <property type="term" value="F:orotidine-5'-phosphate decarboxylase activity"/>
    <property type="evidence" value="ECO:0007669"/>
    <property type="project" value="UniProtKB-UniRule"/>
</dbReference>
<dbReference type="GO" id="GO:0006207">
    <property type="term" value="P:'de novo' pyrimidine nucleobase biosynthetic process"/>
    <property type="evidence" value="ECO:0007669"/>
    <property type="project" value="InterPro"/>
</dbReference>
<dbReference type="GO" id="GO:0044205">
    <property type="term" value="P:'de novo' UMP biosynthetic process"/>
    <property type="evidence" value="ECO:0007669"/>
    <property type="project" value="UniProtKB-UniRule"/>
</dbReference>
<dbReference type="CDD" id="cd04725">
    <property type="entry name" value="OMP_decarboxylase_like"/>
    <property type="match status" value="1"/>
</dbReference>
<dbReference type="FunFam" id="3.20.20.70:FF:000235">
    <property type="entry name" value="Orotidine 5'-phosphate decarboxylase"/>
    <property type="match status" value="1"/>
</dbReference>
<dbReference type="Gene3D" id="3.20.20.70">
    <property type="entry name" value="Aldolase class I"/>
    <property type="match status" value="1"/>
</dbReference>
<dbReference type="HAMAP" id="MF_01200_B">
    <property type="entry name" value="OMPdecase_type1_B"/>
    <property type="match status" value="1"/>
</dbReference>
<dbReference type="InterPro" id="IPR013785">
    <property type="entry name" value="Aldolase_TIM"/>
</dbReference>
<dbReference type="InterPro" id="IPR014732">
    <property type="entry name" value="OMPdecase"/>
</dbReference>
<dbReference type="InterPro" id="IPR018089">
    <property type="entry name" value="OMPdecase_AS"/>
</dbReference>
<dbReference type="InterPro" id="IPR047596">
    <property type="entry name" value="OMPdecase_bac"/>
</dbReference>
<dbReference type="InterPro" id="IPR001754">
    <property type="entry name" value="OMPdeCOase_dom"/>
</dbReference>
<dbReference type="InterPro" id="IPR011060">
    <property type="entry name" value="RibuloseP-bd_barrel"/>
</dbReference>
<dbReference type="NCBIfam" id="NF001273">
    <property type="entry name" value="PRK00230.1"/>
    <property type="match status" value="1"/>
</dbReference>
<dbReference type="NCBIfam" id="TIGR01740">
    <property type="entry name" value="pyrF"/>
    <property type="match status" value="1"/>
</dbReference>
<dbReference type="PANTHER" id="PTHR32119">
    <property type="entry name" value="OROTIDINE 5'-PHOSPHATE DECARBOXYLASE"/>
    <property type="match status" value="1"/>
</dbReference>
<dbReference type="PANTHER" id="PTHR32119:SF2">
    <property type="entry name" value="OROTIDINE 5'-PHOSPHATE DECARBOXYLASE"/>
    <property type="match status" value="1"/>
</dbReference>
<dbReference type="Pfam" id="PF00215">
    <property type="entry name" value="OMPdecase"/>
    <property type="match status" value="1"/>
</dbReference>
<dbReference type="SMART" id="SM00934">
    <property type="entry name" value="OMPdecase"/>
    <property type="match status" value="1"/>
</dbReference>
<dbReference type="SUPFAM" id="SSF51366">
    <property type="entry name" value="Ribulose-phoshate binding barrel"/>
    <property type="match status" value="1"/>
</dbReference>
<dbReference type="PROSITE" id="PS00156">
    <property type="entry name" value="OMPDECASE"/>
    <property type="match status" value="1"/>
</dbReference>
<reference key="1">
    <citation type="journal article" date="2004" name="PLoS Biol.">
        <title>Genomic insights into methanotrophy: the complete genome sequence of Methylococcus capsulatus (Bath).</title>
        <authorList>
            <person name="Ward N.L."/>
            <person name="Larsen O."/>
            <person name="Sakwa J."/>
            <person name="Bruseth L."/>
            <person name="Khouri H.M."/>
            <person name="Durkin A.S."/>
            <person name="Dimitrov G."/>
            <person name="Jiang L."/>
            <person name="Scanlan D."/>
            <person name="Kang K.H."/>
            <person name="Lewis M.R."/>
            <person name="Nelson K.E."/>
            <person name="Methe B.A."/>
            <person name="Wu M."/>
            <person name="Heidelberg J.F."/>
            <person name="Paulsen I.T."/>
            <person name="Fouts D.E."/>
            <person name="Ravel J."/>
            <person name="Tettelin H."/>
            <person name="Ren Q."/>
            <person name="Read T.D."/>
            <person name="DeBoy R.T."/>
            <person name="Seshadri R."/>
            <person name="Salzberg S.L."/>
            <person name="Jensen H.B."/>
            <person name="Birkeland N.K."/>
            <person name="Nelson W.C."/>
            <person name="Dodson R.J."/>
            <person name="Grindhaug S.H."/>
            <person name="Holt I.E."/>
            <person name="Eidhammer I."/>
            <person name="Jonasen I."/>
            <person name="Vanaken S."/>
            <person name="Utterback T.R."/>
            <person name="Feldblyum T.V."/>
            <person name="Fraser C.M."/>
            <person name="Lillehaug J.R."/>
            <person name="Eisen J.A."/>
        </authorList>
    </citation>
    <scope>NUCLEOTIDE SEQUENCE [LARGE SCALE GENOMIC DNA]</scope>
    <source>
        <strain>ATCC 33009 / NCIMB 11132 / Bath</strain>
    </source>
</reference>
<gene>
    <name evidence="1" type="primary">pyrF</name>
    <name type="ordered locus">MCA1094</name>
</gene>
<comment type="function">
    <text evidence="1">Catalyzes the decarboxylation of orotidine 5'-monophosphate (OMP) to uridine 5'-monophosphate (UMP).</text>
</comment>
<comment type="catalytic activity">
    <reaction evidence="1">
        <text>orotidine 5'-phosphate + H(+) = UMP + CO2</text>
        <dbReference type="Rhea" id="RHEA:11596"/>
        <dbReference type="ChEBI" id="CHEBI:15378"/>
        <dbReference type="ChEBI" id="CHEBI:16526"/>
        <dbReference type="ChEBI" id="CHEBI:57538"/>
        <dbReference type="ChEBI" id="CHEBI:57865"/>
        <dbReference type="EC" id="4.1.1.23"/>
    </reaction>
</comment>
<comment type="pathway">
    <text evidence="1">Pyrimidine metabolism; UMP biosynthesis via de novo pathway; UMP from orotate: step 2/2.</text>
</comment>
<comment type="subunit">
    <text evidence="1">Homodimer.</text>
</comment>
<comment type="similarity">
    <text evidence="1">Belongs to the OMP decarboxylase family. Type 1 subfamily.</text>
</comment>
<sequence>MPNFLSNKPIPVADRLIMALDLPDVSEAKTLVERLGDAVSFYKVGLELFMSGDCFALVDWLKAKDKKVFVDLKFFDVPETVGRAVKALSRRGVDFATVHGNDAIMEAAARNKGSLGILAVTVLTSLDQGDLRDLGFQCDVQELVLSRARRALAVGCDGVVSSGLEVPLLRGEIDHELMVVSPGIRPVENRPEDDQKRVVTVDQAFRNGADYIVVGRPIRDAADPREAAQRAQAQIRDVFAAG</sequence>
<name>PYRF_METCA</name>
<accession>Q609Y2</accession>
<keyword id="KW-0210">Decarboxylase</keyword>
<keyword id="KW-0456">Lyase</keyword>
<keyword id="KW-0665">Pyrimidine biosynthesis</keyword>
<keyword id="KW-1185">Reference proteome</keyword>
<proteinExistence type="inferred from homology"/>